<reference key="1">
    <citation type="journal article" date="2006" name="Proc. Natl. Acad. Sci. U.S.A.">
        <title>Comparative genomics of the lactic acid bacteria.</title>
        <authorList>
            <person name="Makarova K.S."/>
            <person name="Slesarev A."/>
            <person name="Wolf Y.I."/>
            <person name="Sorokin A."/>
            <person name="Mirkin B."/>
            <person name="Koonin E.V."/>
            <person name="Pavlov A."/>
            <person name="Pavlova N."/>
            <person name="Karamychev V."/>
            <person name="Polouchine N."/>
            <person name="Shakhova V."/>
            <person name="Grigoriev I."/>
            <person name="Lou Y."/>
            <person name="Rohksar D."/>
            <person name="Lucas S."/>
            <person name="Huang K."/>
            <person name="Goodstein D.M."/>
            <person name="Hawkins T."/>
            <person name="Plengvidhya V."/>
            <person name="Welker D."/>
            <person name="Hughes J."/>
            <person name="Goh Y."/>
            <person name="Benson A."/>
            <person name="Baldwin K."/>
            <person name="Lee J.-H."/>
            <person name="Diaz-Muniz I."/>
            <person name="Dosti B."/>
            <person name="Smeianov V."/>
            <person name="Wechter W."/>
            <person name="Barabote R."/>
            <person name="Lorca G."/>
            <person name="Altermann E."/>
            <person name="Barrangou R."/>
            <person name="Ganesan B."/>
            <person name="Xie Y."/>
            <person name="Rawsthorne H."/>
            <person name="Tamir D."/>
            <person name="Parker C."/>
            <person name="Breidt F."/>
            <person name="Broadbent J.R."/>
            <person name="Hutkins R."/>
            <person name="O'Sullivan D."/>
            <person name="Steele J."/>
            <person name="Unlu G."/>
            <person name="Saier M.H. Jr."/>
            <person name="Klaenhammer T."/>
            <person name="Richardson P."/>
            <person name="Kozyavkin S."/>
            <person name="Weimer B.C."/>
            <person name="Mills D.A."/>
        </authorList>
    </citation>
    <scope>NUCLEOTIDE SEQUENCE [LARGE SCALE GENOMIC DNA]</scope>
    <source>
        <strain>ATCC BAA-365 / Lb-18</strain>
    </source>
</reference>
<gene>
    <name evidence="1" type="primary">folD</name>
    <name type="ordered locus">LBUL_1320</name>
</gene>
<accession>Q049N0</accession>
<comment type="function">
    <text evidence="1">Catalyzes the oxidation of 5,10-methylenetetrahydrofolate to 5,10-methenyltetrahydrofolate and then the hydrolysis of 5,10-methenyltetrahydrofolate to 10-formyltetrahydrofolate.</text>
</comment>
<comment type="catalytic activity">
    <reaction evidence="1">
        <text>(6R)-5,10-methylene-5,6,7,8-tetrahydrofolate + NADP(+) = (6R)-5,10-methenyltetrahydrofolate + NADPH</text>
        <dbReference type="Rhea" id="RHEA:22812"/>
        <dbReference type="ChEBI" id="CHEBI:15636"/>
        <dbReference type="ChEBI" id="CHEBI:57455"/>
        <dbReference type="ChEBI" id="CHEBI:57783"/>
        <dbReference type="ChEBI" id="CHEBI:58349"/>
        <dbReference type="EC" id="1.5.1.5"/>
    </reaction>
</comment>
<comment type="catalytic activity">
    <reaction evidence="1">
        <text>(6R)-5,10-methenyltetrahydrofolate + H2O = (6R)-10-formyltetrahydrofolate + H(+)</text>
        <dbReference type="Rhea" id="RHEA:23700"/>
        <dbReference type="ChEBI" id="CHEBI:15377"/>
        <dbReference type="ChEBI" id="CHEBI:15378"/>
        <dbReference type="ChEBI" id="CHEBI:57455"/>
        <dbReference type="ChEBI" id="CHEBI:195366"/>
        <dbReference type="EC" id="3.5.4.9"/>
    </reaction>
</comment>
<comment type="pathway">
    <text evidence="1">One-carbon metabolism; tetrahydrofolate interconversion.</text>
</comment>
<comment type="subunit">
    <text evidence="1">Homodimer.</text>
</comment>
<comment type="similarity">
    <text evidence="1">Belongs to the tetrahydrofolate dehydrogenase/cyclohydrolase family.</text>
</comment>
<feature type="chain" id="PRO_0000305830" description="Bifunctional protein FolD">
    <location>
        <begin position="1"/>
        <end position="283"/>
    </location>
</feature>
<feature type="binding site" evidence="1">
    <location>
        <begin position="164"/>
        <end position="166"/>
    </location>
    <ligand>
        <name>NADP(+)</name>
        <dbReference type="ChEBI" id="CHEBI:58349"/>
    </ligand>
</feature>
<feature type="binding site" evidence="1">
    <location>
        <position position="189"/>
    </location>
    <ligand>
        <name>NADP(+)</name>
        <dbReference type="ChEBI" id="CHEBI:58349"/>
    </ligand>
</feature>
<feature type="binding site" evidence="1">
    <location>
        <position position="230"/>
    </location>
    <ligand>
        <name>NADP(+)</name>
        <dbReference type="ChEBI" id="CHEBI:58349"/>
    </ligand>
</feature>
<organism>
    <name type="scientific">Lactobacillus delbrueckii subsp. bulgaricus (strain ATCC BAA-365 / Lb-18)</name>
    <dbReference type="NCBI Taxonomy" id="321956"/>
    <lineage>
        <taxon>Bacteria</taxon>
        <taxon>Bacillati</taxon>
        <taxon>Bacillota</taxon>
        <taxon>Bacilli</taxon>
        <taxon>Lactobacillales</taxon>
        <taxon>Lactobacillaceae</taxon>
        <taxon>Lactobacillus</taxon>
    </lineage>
</organism>
<name>FOLD_LACDB</name>
<sequence length="283" mass="30604">MGEILDGKKLARELGEKLGSEVDSLKEHGVSPKLCVINIGDDPASKVYVASKKRKAEKLGIKQVVYQLPADESEEDVLKLIDSLNADPEVSSLMVQLPVPPQINADRVIERIDPEKDVDCLTPANIGRLWQGKHFVEPATAAGIIALLDHYQIDLTGKNAVIVGRSNIVGKPLAALMLERNASVSILHSRSRNLADLTKQADILVCAVGKAEMIKADMVKEGAVVIDVGINRVDGHLVGDVDFAPVKEKASWITPVPGGVGPLTVEFLMEEVIKLTRRQHGLD</sequence>
<evidence type="ECO:0000255" key="1">
    <source>
        <dbReference type="HAMAP-Rule" id="MF_01576"/>
    </source>
</evidence>
<protein>
    <recommendedName>
        <fullName evidence="1">Bifunctional protein FolD</fullName>
    </recommendedName>
    <domain>
        <recommendedName>
            <fullName evidence="1">Methylenetetrahydrofolate dehydrogenase</fullName>
            <ecNumber evidence="1">1.5.1.5</ecNumber>
        </recommendedName>
    </domain>
    <domain>
        <recommendedName>
            <fullName evidence="1">Methenyltetrahydrofolate cyclohydrolase</fullName>
            <ecNumber evidence="1">3.5.4.9</ecNumber>
        </recommendedName>
    </domain>
</protein>
<proteinExistence type="inferred from homology"/>
<keyword id="KW-0028">Amino-acid biosynthesis</keyword>
<keyword id="KW-0368">Histidine biosynthesis</keyword>
<keyword id="KW-0378">Hydrolase</keyword>
<keyword id="KW-0486">Methionine biosynthesis</keyword>
<keyword id="KW-0511">Multifunctional enzyme</keyword>
<keyword id="KW-0521">NADP</keyword>
<keyword id="KW-0554">One-carbon metabolism</keyword>
<keyword id="KW-0560">Oxidoreductase</keyword>
<keyword id="KW-0658">Purine biosynthesis</keyword>
<dbReference type="EC" id="1.5.1.5" evidence="1"/>
<dbReference type="EC" id="3.5.4.9" evidence="1"/>
<dbReference type="EMBL" id="CP000412">
    <property type="protein sequence ID" value="ABJ58842.1"/>
    <property type="molecule type" value="Genomic_DNA"/>
</dbReference>
<dbReference type="RefSeq" id="WP_003615525.1">
    <property type="nucleotide sequence ID" value="NC_008529.1"/>
</dbReference>
<dbReference type="SMR" id="Q049N0"/>
<dbReference type="KEGG" id="lbu:LBUL_1320"/>
<dbReference type="HOGENOM" id="CLU_034045_2_1_9"/>
<dbReference type="BioCyc" id="LDEL321956:LBUL_RS06225-MONOMER"/>
<dbReference type="UniPathway" id="UPA00193"/>
<dbReference type="GO" id="GO:0005829">
    <property type="term" value="C:cytosol"/>
    <property type="evidence" value="ECO:0007669"/>
    <property type="project" value="TreeGrafter"/>
</dbReference>
<dbReference type="GO" id="GO:0004477">
    <property type="term" value="F:methenyltetrahydrofolate cyclohydrolase activity"/>
    <property type="evidence" value="ECO:0007669"/>
    <property type="project" value="UniProtKB-UniRule"/>
</dbReference>
<dbReference type="GO" id="GO:0004488">
    <property type="term" value="F:methylenetetrahydrofolate dehydrogenase (NADP+) activity"/>
    <property type="evidence" value="ECO:0007669"/>
    <property type="project" value="UniProtKB-UniRule"/>
</dbReference>
<dbReference type="GO" id="GO:0000105">
    <property type="term" value="P:L-histidine biosynthetic process"/>
    <property type="evidence" value="ECO:0007669"/>
    <property type="project" value="UniProtKB-KW"/>
</dbReference>
<dbReference type="GO" id="GO:0009086">
    <property type="term" value="P:methionine biosynthetic process"/>
    <property type="evidence" value="ECO:0007669"/>
    <property type="project" value="UniProtKB-KW"/>
</dbReference>
<dbReference type="GO" id="GO:0006164">
    <property type="term" value="P:purine nucleotide biosynthetic process"/>
    <property type="evidence" value="ECO:0007669"/>
    <property type="project" value="UniProtKB-KW"/>
</dbReference>
<dbReference type="GO" id="GO:0035999">
    <property type="term" value="P:tetrahydrofolate interconversion"/>
    <property type="evidence" value="ECO:0007669"/>
    <property type="project" value="UniProtKB-UniRule"/>
</dbReference>
<dbReference type="CDD" id="cd01080">
    <property type="entry name" value="NAD_bind_m-THF_DH_Cyclohyd"/>
    <property type="match status" value="1"/>
</dbReference>
<dbReference type="FunFam" id="3.40.50.720:FF:000094">
    <property type="entry name" value="Bifunctional protein FolD"/>
    <property type="match status" value="1"/>
</dbReference>
<dbReference type="FunFam" id="3.40.50.10860:FF:000005">
    <property type="entry name" value="C-1-tetrahydrofolate synthase, cytoplasmic, putative"/>
    <property type="match status" value="1"/>
</dbReference>
<dbReference type="Gene3D" id="3.40.50.10860">
    <property type="entry name" value="Leucine Dehydrogenase, chain A, domain 1"/>
    <property type="match status" value="1"/>
</dbReference>
<dbReference type="Gene3D" id="3.40.50.720">
    <property type="entry name" value="NAD(P)-binding Rossmann-like Domain"/>
    <property type="match status" value="1"/>
</dbReference>
<dbReference type="HAMAP" id="MF_01576">
    <property type="entry name" value="THF_DHG_CYH"/>
    <property type="match status" value="1"/>
</dbReference>
<dbReference type="InterPro" id="IPR046346">
    <property type="entry name" value="Aminoacid_DH-like_N_sf"/>
</dbReference>
<dbReference type="InterPro" id="IPR036291">
    <property type="entry name" value="NAD(P)-bd_dom_sf"/>
</dbReference>
<dbReference type="InterPro" id="IPR000672">
    <property type="entry name" value="THF_DH/CycHdrlase"/>
</dbReference>
<dbReference type="InterPro" id="IPR020630">
    <property type="entry name" value="THF_DH/CycHdrlase_cat_dom"/>
</dbReference>
<dbReference type="InterPro" id="IPR020867">
    <property type="entry name" value="THF_DH/CycHdrlase_CS"/>
</dbReference>
<dbReference type="InterPro" id="IPR020631">
    <property type="entry name" value="THF_DH/CycHdrlase_NAD-bd_dom"/>
</dbReference>
<dbReference type="PANTHER" id="PTHR48099:SF5">
    <property type="entry name" value="C-1-TETRAHYDROFOLATE SYNTHASE, CYTOPLASMIC"/>
    <property type="match status" value="1"/>
</dbReference>
<dbReference type="PANTHER" id="PTHR48099">
    <property type="entry name" value="C-1-TETRAHYDROFOLATE SYNTHASE, CYTOPLASMIC-RELATED"/>
    <property type="match status" value="1"/>
</dbReference>
<dbReference type="Pfam" id="PF00763">
    <property type="entry name" value="THF_DHG_CYH"/>
    <property type="match status" value="1"/>
</dbReference>
<dbReference type="Pfam" id="PF02882">
    <property type="entry name" value="THF_DHG_CYH_C"/>
    <property type="match status" value="1"/>
</dbReference>
<dbReference type="PRINTS" id="PR00085">
    <property type="entry name" value="THFDHDRGNASE"/>
</dbReference>
<dbReference type="SUPFAM" id="SSF53223">
    <property type="entry name" value="Aminoacid dehydrogenase-like, N-terminal domain"/>
    <property type="match status" value="1"/>
</dbReference>
<dbReference type="SUPFAM" id="SSF51735">
    <property type="entry name" value="NAD(P)-binding Rossmann-fold domains"/>
    <property type="match status" value="1"/>
</dbReference>
<dbReference type="PROSITE" id="PS00766">
    <property type="entry name" value="THF_DHG_CYH_1"/>
    <property type="match status" value="1"/>
</dbReference>